<feature type="chain" id="PRO_0000460943" description="Disks large homolog 1">
    <location>
        <begin position="1"/>
        <end position="927"/>
    </location>
</feature>
<feature type="domain" description="L27" evidence="8">
    <location>
        <begin position="4"/>
        <end position="64"/>
    </location>
</feature>
<feature type="domain" description="PDZ 1" evidence="6">
    <location>
        <begin position="230"/>
        <end position="317"/>
    </location>
</feature>
<feature type="domain" description="PDZ 2" evidence="6">
    <location>
        <begin position="325"/>
        <end position="412"/>
    </location>
</feature>
<feature type="domain" description="PDZ 3" evidence="6">
    <location>
        <begin position="474"/>
        <end position="555"/>
    </location>
</feature>
<feature type="domain" description="SH3" evidence="7">
    <location>
        <begin position="581"/>
        <end position="651"/>
    </location>
</feature>
<feature type="domain" description="Guanylate kinase-like" evidence="5">
    <location>
        <begin position="683"/>
        <end position="858"/>
    </location>
</feature>
<feature type="region of interest" description="Interaction with SH3 domains" evidence="2">
    <location>
        <begin position="162"/>
        <end position="212"/>
    </location>
</feature>
<feature type="region of interest" description="Required for interaction with MARCHF2" evidence="2">
    <location>
        <begin position="224"/>
        <end position="546"/>
    </location>
</feature>
<feature type="region of interest" description="Disordered" evidence="9">
    <location>
        <begin position="691"/>
        <end position="719"/>
    </location>
</feature>
<feature type="compositionally biased region" description="Polar residues" evidence="9">
    <location>
        <begin position="704"/>
        <end position="717"/>
    </location>
</feature>
<feature type="modified residue" description="Phosphothreonine" evidence="2">
    <location>
        <position position="115"/>
    </location>
</feature>
<feature type="modified residue" description="Phosphoserine" evidence="2">
    <location>
        <position position="122"/>
    </location>
</feature>
<feature type="modified residue" description="Phosphoserine" evidence="2">
    <location>
        <position position="138"/>
    </location>
</feature>
<feature type="modified residue" description="Phosphoserine" evidence="2">
    <location>
        <position position="158"/>
    </location>
</feature>
<feature type="modified residue" description="Phosphoserine" evidence="3">
    <location>
        <position position="232"/>
    </location>
</feature>
<feature type="modified residue" description="Phosphotyrosine" evidence="4">
    <location>
        <position position="399"/>
    </location>
</feature>
<feature type="modified residue" description="Phosphoserine" evidence="2">
    <location>
        <position position="568"/>
    </location>
</feature>
<feature type="modified residue" description="Phosphoserine" evidence="2">
    <location>
        <position position="573"/>
    </location>
</feature>
<feature type="modified residue" description="Phosphoserine" evidence="2">
    <location>
        <position position="575"/>
    </location>
</feature>
<feature type="modified residue" description="Phosphoserine" evidence="2">
    <location>
        <position position="579"/>
    </location>
</feature>
<feature type="modified residue" description="Phosphoserine" evidence="4">
    <location>
        <position position="598"/>
    </location>
</feature>
<feature type="modified residue" description="Phosphoserine" evidence="2">
    <location>
        <position position="619"/>
    </location>
</feature>
<feature type="modified residue" description="Phosphoserine" evidence="2">
    <location>
        <position position="707"/>
    </location>
</feature>
<feature type="modified residue" description="Phosphoserine" evidence="2">
    <location>
        <position position="710"/>
    </location>
</feature>
<feature type="modified residue" description="Phosphoserine" evidence="3">
    <location>
        <position position="857"/>
    </location>
</feature>
<keyword id="KW-0965">Cell junction</keyword>
<keyword id="KW-1003">Cell membrane</keyword>
<keyword id="KW-0963">Cytoplasm</keyword>
<keyword id="KW-0256">Endoplasmic reticulum</keyword>
<keyword id="KW-0472">Membrane</keyword>
<keyword id="KW-0597">Phosphoprotein</keyword>
<keyword id="KW-1185">Reference proteome</keyword>
<keyword id="KW-0677">Repeat</keyword>
<keyword id="KW-0728">SH3 domain</keyword>
<keyword id="KW-0770">Synapse</keyword>
<keyword id="KW-0832">Ubl conjugation</keyword>
<accession>A0A8C0TYJ0</accession>
<accession>A0A8I3QNS7</accession>
<name>DLG1_CANLF</name>
<protein>
    <recommendedName>
        <fullName evidence="11">Disks large homolog 1</fullName>
    </recommendedName>
    <alternativeName>
        <fullName evidence="2">Synapse-associated protein 97</fullName>
        <shortName evidence="2">SAP-97</shortName>
        <shortName evidence="1">SAP97</shortName>
    </alternativeName>
</protein>
<gene>
    <name type="primary">DLG1</name>
</gene>
<sequence>MPVRKQDTQRALHLLEEYRSKLSQTEDRQLRSSIERVINIFQSNLFQALIDIQEFYEVTLLDNPKCIDRSKQSEPIQPVNTWEISSLPSTTVTSETLPSSLSPSVEKYRYQDEDTPPQEHISPQITNEVIGPELVHVSEKNLSEIENVHGFVSHSHISPIKPTEAVPPSSPTVPVIPVLPVPAENTVILPTIPQANPPPVLVNTDSLETSTYVNGTDADYEYEEITLERGNSGLGFSIAGGTDNPHIGDDSSIFITKIIAGGAAAQDGRLRVNDCILRVNEVDVRDVTHSKAVEALKEAGSIVRLYVKRRKPVSEKIMEIKLIKGPKGLGFSIAGGVGNQHIPGDNSIYVTKIIEGGAAHKDGKLQIGDKLLAVNSVCLEEVTHEEAVTALKNTSDFVYLKVAKPTSMYMNDGYAPPDITNSSSQPVDNHVSPSSYLGHTPASPARYSPVSKAMLGDDEITREPRKVVLHRGSTGLGFNIVGGEDGEGIFISFILAGGPADLSGELRKGDRIISVNSVDLRTASHEQAAAALKNAGQAVTIVAQYRPEEYSRFEAKIHDLREQMMNSSISSGSGSLRTSQKRSLYVRALFDYDKTKDSGLPSQGLNFKFGDILHVINASDDEWWQARQVTPDGESDEVGVIPSKRRVEKKERARLKTVKFNSKTRGDKGQSFNDKRKKNLFSRKFPFYKNKDQSEQETSDADQHITSNASDSESSYRGQEEYVLSYEPVNQQEVNYTRPVIILGPMKDRINDDLISEFPDKFGSCVPHTTRPKRDYEVDGRDYHFVTSREQMEKDIQEHKFIEAGQYNNHLYGTSVQSVREVAEKGKHCILDVSGNAIKRLQIAQLYPISIFIKPKSMENIMEMNKRLTEEQARKTFERAMKLEQEFTEHFTAIVQGDTLEDIYNQVKQIIEEQSGPYIWVPAKEKL</sequence>
<dbReference type="RefSeq" id="XP_038301242.1">
    <property type="nucleotide sequence ID" value="XM_038445314.1"/>
</dbReference>
<dbReference type="RefSeq" id="XP_038318173.1">
    <property type="nucleotide sequence ID" value="XM_038462245.1"/>
</dbReference>
<dbReference type="RefSeq" id="XP_038439125.1">
    <property type="nucleotide sequence ID" value="XM_038583197.1"/>
</dbReference>
<dbReference type="RefSeq" id="XP_545159.2">
    <property type="nucleotide sequence ID" value="XM_545159.4"/>
</dbReference>
<dbReference type="SMR" id="A0A8C0TYJ0"/>
<dbReference type="Ensembl" id="ENSCAFT00030042732.1">
    <property type="protein sequence ID" value="ENSCAFP00030037283.1"/>
    <property type="gene ID" value="ENSCAFG00030021768.1"/>
</dbReference>
<dbReference type="Ensembl" id="ENSCAFT00040048337.1">
    <property type="protein sequence ID" value="ENSCAFP00040042219.1"/>
    <property type="gene ID" value="ENSCAFG00040025757.1"/>
</dbReference>
<dbReference type="Ensembl" id="ENSCAFT00805055027">
    <property type="protein sequence ID" value="ENSCAFP00805043229"/>
    <property type="gene ID" value="ENSCAFG00805030117"/>
</dbReference>
<dbReference type="Ensembl" id="ENSCAFT00845054291.1">
    <property type="protein sequence ID" value="ENSCAFP00845042656.1"/>
    <property type="gene ID" value="ENSCAFG00845030548.1"/>
</dbReference>
<dbReference type="GeneID" id="488036"/>
<dbReference type="GeneTree" id="ENSGT00940000159409"/>
<dbReference type="OrthoDB" id="78824at2759"/>
<dbReference type="Reactome" id="R-CFA-399719">
    <property type="pathway name" value="Trafficking of AMPA receptors"/>
</dbReference>
<dbReference type="Reactome" id="R-CFA-438066">
    <property type="pathway name" value="Unblocking of NMDA receptors, glutamate binding and activation"/>
</dbReference>
<dbReference type="Reactome" id="R-CFA-451308">
    <property type="pathway name" value="Activation of Ca-permeable Kainate Receptor"/>
</dbReference>
<dbReference type="Reactome" id="R-CFA-5673001">
    <property type="pathway name" value="RAF/MAP kinase cascade"/>
</dbReference>
<dbReference type="Reactome" id="R-CFA-8849932">
    <property type="pathway name" value="Synaptic adhesion-like molecules"/>
</dbReference>
<dbReference type="Proteomes" id="UP000002254">
    <property type="component" value="Unplaced"/>
</dbReference>
<dbReference type="Proteomes" id="UP000694429">
    <property type="component" value="Chromosome 33"/>
</dbReference>
<dbReference type="Proteomes" id="UP000694542">
    <property type="component" value="Chromosome 33"/>
</dbReference>
<dbReference type="Proteomes" id="UP000805418">
    <property type="component" value="Chromosome 33"/>
</dbReference>
<dbReference type="GO" id="GO:0016324">
    <property type="term" value="C:apical plasma membrane"/>
    <property type="evidence" value="ECO:0007669"/>
    <property type="project" value="UniProtKB-SubCell"/>
</dbReference>
<dbReference type="GO" id="GO:0005604">
    <property type="term" value="C:basement membrane"/>
    <property type="evidence" value="ECO:0007669"/>
    <property type="project" value="Ensembl"/>
</dbReference>
<dbReference type="GO" id="GO:0016323">
    <property type="term" value="C:basolateral plasma membrane"/>
    <property type="evidence" value="ECO:0007669"/>
    <property type="project" value="UniProtKB-SubCell"/>
</dbReference>
<dbReference type="GO" id="GO:0005923">
    <property type="term" value="C:bicellular tight junction"/>
    <property type="evidence" value="ECO:0007669"/>
    <property type="project" value="Ensembl"/>
</dbReference>
<dbReference type="GO" id="GO:0031253">
    <property type="term" value="C:cell projection membrane"/>
    <property type="evidence" value="ECO:0007669"/>
    <property type="project" value="Ensembl"/>
</dbReference>
<dbReference type="GO" id="GO:0009898">
    <property type="term" value="C:cytoplasmic side of plasma membrane"/>
    <property type="evidence" value="ECO:0007669"/>
    <property type="project" value="Ensembl"/>
</dbReference>
<dbReference type="GO" id="GO:0005789">
    <property type="term" value="C:endoplasmic reticulum membrane"/>
    <property type="evidence" value="ECO:0007669"/>
    <property type="project" value="UniProtKB-SubCell"/>
</dbReference>
<dbReference type="GO" id="GO:0098978">
    <property type="term" value="C:glutamatergic synapse"/>
    <property type="evidence" value="ECO:0007669"/>
    <property type="project" value="Ensembl"/>
</dbReference>
<dbReference type="GO" id="GO:0005794">
    <property type="term" value="C:Golgi apparatus"/>
    <property type="evidence" value="ECO:0007669"/>
    <property type="project" value="Ensembl"/>
</dbReference>
<dbReference type="GO" id="GO:0001772">
    <property type="term" value="C:immunological synapse"/>
    <property type="evidence" value="ECO:0007669"/>
    <property type="project" value="Ensembl"/>
</dbReference>
<dbReference type="GO" id="GO:0043219">
    <property type="term" value="C:lateral loop"/>
    <property type="evidence" value="ECO:0007669"/>
    <property type="project" value="Ensembl"/>
</dbReference>
<dbReference type="GO" id="GO:0016328">
    <property type="term" value="C:lateral plasma membrane"/>
    <property type="evidence" value="ECO:0007669"/>
    <property type="project" value="Ensembl"/>
</dbReference>
<dbReference type="GO" id="GO:0045121">
    <property type="term" value="C:membrane raft"/>
    <property type="evidence" value="ECO:0007669"/>
    <property type="project" value="Ensembl"/>
</dbReference>
<dbReference type="GO" id="GO:0005874">
    <property type="term" value="C:microtubule"/>
    <property type="evidence" value="ECO:0007669"/>
    <property type="project" value="Ensembl"/>
</dbReference>
<dbReference type="GO" id="GO:0097025">
    <property type="term" value="C:MPP7-DLG1-LIN7 complex"/>
    <property type="evidence" value="ECO:0007669"/>
    <property type="project" value="Ensembl"/>
</dbReference>
<dbReference type="GO" id="GO:0035748">
    <property type="term" value="C:myelin sheath abaxonal region"/>
    <property type="evidence" value="ECO:0007669"/>
    <property type="project" value="Ensembl"/>
</dbReference>
<dbReference type="GO" id="GO:0031594">
    <property type="term" value="C:neuromuscular junction"/>
    <property type="evidence" value="ECO:0007669"/>
    <property type="project" value="Ensembl"/>
</dbReference>
<dbReference type="GO" id="GO:0033268">
    <property type="term" value="C:node of Ranvier"/>
    <property type="evidence" value="ECO:0007669"/>
    <property type="project" value="Ensembl"/>
</dbReference>
<dbReference type="GO" id="GO:0005634">
    <property type="term" value="C:nucleus"/>
    <property type="evidence" value="ECO:0007669"/>
    <property type="project" value="Ensembl"/>
</dbReference>
<dbReference type="GO" id="GO:0048471">
    <property type="term" value="C:perinuclear region of cytoplasm"/>
    <property type="evidence" value="ECO:0007669"/>
    <property type="project" value="Ensembl"/>
</dbReference>
<dbReference type="GO" id="GO:0014069">
    <property type="term" value="C:postsynaptic density"/>
    <property type="evidence" value="ECO:0007669"/>
    <property type="project" value="UniProtKB-SubCell"/>
</dbReference>
<dbReference type="GO" id="GO:0042383">
    <property type="term" value="C:sarcolemma"/>
    <property type="evidence" value="ECO:0007669"/>
    <property type="project" value="UniProtKB-SubCell"/>
</dbReference>
<dbReference type="GO" id="GO:0097060">
    <property type="term" value="C:synaptic membrane"/>
    <property type="evidence" value="ECO:0007669"/>
    <property type="project" value="Ensembl"/>
</dbReference>
<dbReference type="GO" id="GO:0019900">
    <property type="term" value="F:kinase binding"/>
    <property type="evidence" value="ECO:0007669"/>
    <property type="project" value="Ensembl"/>
</dbReference>
<dbReference type="GO" id="GO:0097016">
    <property type="term" value="F:L27 domain binding"/>
    <property type="evidence" value="ECO:0007669"/>
    <property type="project" value="Ensembl"/>
</dbReference>
<dbReference type="GO" id="GO:0060090">
    <property type="term" value="F:molecular adaptor activity"/>
    <property type="evidence" value="ECO:0007669"/>
    <property type="project" value="Ensembl"/>
</dbReference>
<dbReference type="GO" id="GO:0019902">
    <property type="term" value="F:phosphatase binding"/>
    <property type="evidence" value="ECO:0007669"/>
    <property type="project" value="Ensembl"/>
</dbReference>
<dbReference type="GO" id="GO:0015459">
    <property type="term" value="F:potassium channel regulator activity"/>
    <property type="evidence" value="ECO:0007669"/>
    <property type="project" value="Ensembl"/>
</dbReference>
<dbReference type="GO" id="GO:0098919">
    <property type="term" value="F:structural constituent of postsynaptic density"/>
    <property type="evidence" value="ECO:0007669"/>
    <property type="project" value="Ensembl"/>
</dbReference>
<dbReference type="GO" id="GO:0044325">
    <property type="term" value="F:transmembrane transporter binding"/>
    <property type="evidence" value="ECO:0007669"/>
    <property type="project" value="Ensembl"/>
</dbReference>
<dbReference type="GO" id="GO:0030041">
    <property type="term" value="P:actin filament polymerization"/>
    <property type="evidence" value="ECO:0007669"/>
    <property type="project" value="Ensembl"/>
</dbReference>
<dbReference type="GO" id="GO:0042982">
    <property type="term" value="P:amyloid precursor protein metabolic process"/>
    <property type="evidence" value="ECO:0007669"/>
    <property type="project" value="Ensembl"/>
</dbReference>
<dbReference type="GO" id="GO:0030953">
    <property type="term" value="P:astral microtubule organization"/>
    <property type="evidence" value="ECO:0007669"/>
    <property type="project" value="Ensembl"/>
</dbReference>
<dbReference type="GO" id="GO:0070830">
    <property type="term" value="P:bicellular tight junction assembly"/>
    <property type="evidence" value="ECO:0007669"/>
    <property type="project" value="Ensembl"/>
</dbReference>
<dbReference type="GO" id="GO:0001658">
    <property type="term" value="P:branching involved in ureteric bud morphogenesis"/>
    <property type="evidence" value="ECO:0007669"/>
    <property type="project" value="Ensembl"/>
</dbReference>
<dbReference type="GO" id="GO:0098609">
    <property type="term" value="P:cell-cell adhesion"/>
    <property type="evidence" value="ECO:0007669"/>
    <property type="project" value="Ensembl"/>
</dbReference>
<dbReference type="GO" id="GO:0007268">
    <property type="term" value="P:chemical synaptic transmission"/>
    <property type="evidence" value="ECO:0007669"/>
    <property type="project" value="InterPro"/>
</dbReference>
<dbReference type="GO" id="GO:0030866">
    <property type="term" value="P:cortical actin cytoskeleton organization"/>
    <property type="evidence" value="ECO:0007669"/>
    <property type="project" value="Ensembl"/>
</dbReference>
<dbReference type="GO" id="GO:0043622">
    <property type="term" value="P:cortical microtubule organization"/>
    <property type="evidence" value="ECO:0007669"/>
    <property type="project" value="Ensembl"/>
</dbReference>
<dbReference type="GO" id="GO:0048704">
    <property type="term" value="P:embryonic skeletal system morphogenesis"/>
    <property type="evidence" value="ECO:0007669"/>
    <property type="project" value="Ensembl"/>
</dbReference>
<dbReference type="GO" id="GO:0001935">
    <property type="term" value="P:endothelial cell proliferation"/>
    <property type="evidence" value="ECO:0007669"/>
    <property type="project" value="Ensembl"/>
</dbReference>
<dbReference type="GO" id="GO:0010669">
    <property type="term" value="P:epithelial structure maintenance"/>
    <property type="evidence" value="ECO:0000315"/>
    <property type="project" value="UniProtKB"/>
</dbReference>
<dbReference type="GO" id="GO:0051660">
    <property type="term" value="P:establishment of centrosome localization"/>
    <property type="evidence" value="ECO:0007669"/>
    <property type="project" value="Ensembl"/>
</dbReference>
<dbReference type="GO" id="GO:0060022">
    <property type="term" value="P:hard palate development"/>
    <property type="evidence" value="ECO:0007669"/>
    <property type="project" value="Ensembl"/>
</dbReference>
<dbReference type="GO" id="GO:0001771">
    <property type="term" value="P:immunological synapse formation"/>
    <property type="evidence" value="ECO:0007669"/>
    <property type="project" value="Ensembl"/>
</dbReference>
<dbReference type="GO" id="GO:0002088">
    <property type="term" value="P:lens development in camera-type eye"/>
    <property type="evidence" value="ECO:0007669"/>
    <property type="project" value="Ensembl"/>
</dbReference>
<dbReference type="GO" id="GO:0031579">
    <property type="term" value="P:membrane raft organization"/>
    <property type="evidence" value="ECO:0007669"/>
    <property type="project" value="Ensembl"/>
</dbReference>
<dbReference type="GO" id="GO:0098915">
    <property type="term" value="P:membrane repolarization during ventricular cardiac muscle cell action potential"/>
    <property type="evidence" value="ECO:0007669"/>
    <property type="project" value="Ensembl"/>
</dbReference>
<dbReference type="GO" id="GO:0050680">
    <property type="term" value="P:negative regulation of epithelial cell proliferation"/>
    <property type="evidence" value="ECO:0007669"/>
    <property type="project" value="Ensembl"/>
</dbReference>
<dbReference type="GO" id="GO:0070373">
    <property type="term" value="P:negative regulation of ERK1 and ERK2 cascade"/>
    <property type="evidence" value="ECO:0007669"/>
    <property type="project" value="Ensembl"/>
</dbReference>
<dbReference type="GO" id="GO:2000134">
    <property type="term" value="P:negative regulation of G1/S transition of mitotic cell cycle"/>
    <property type="evidence" value="ECO:0007669"/>
    <property type="project" value="Ensembl"/>
</dbReference>
<dbReference type="GO" id="GO:1903753">
    <property type="term" value="P:negative regulation of p38MAPK cascade"/>
    <property type="evidence" value="ECO:0007669"/>
    <property type="project" value="Ensembl"/>
</dbReference>
<dbReference type="GO" id="GO:0051898">
    <property type="term" value="P:negative regulation of phosphatidylinositol 3-kinase/protein kinase B signal transduction"/>
    <property type="evidence" value="ECO:0007669"/>
    <property type="project" value="Ensembl"/>
</dbReference>
<dbReference type="GO" id="GO:0042130">
    <property type="term" value="P:negative regulation of T cell proliferation"/>
    <property type="evidence" value="ECO:0007669"/>
    <property type="project" value="Ensembl"/>
</dbReference>
<dbReference type="GO" id="GO:0000122">
    <property type="term" value="P:negative regulation of transcription by RNA polymerase II"/>
    <property type="evidence" value="ECO:0007669"/>
    <property type="project" value="Ensembl"/>
</dbReference>
<dbReference type="GO" id="GO:0099645">
    <property type="term" value="P:neurotransmitter receptor localization to postsynaptic specialization membrane"/>
    <property type="evidence" value="ECO:0007669"/>
    <property type="project" value="Ensembl"/>
</dbReference>
<dbReference type="GO" id="GO:0030432">
    <property type="term" value="P:peristalsis"/>
    <property type="evidence" value="ECO:0007669"/>
    <property type="project" value="Ensembl"/>
</dbReference>
<dbReference type="GO" id="GO:0043491">
    <property type="term" value="P:phosphatidylinositol 3-kinase/protein kinase B signal transduction"/>
    <property type="evidence" value="ECO:0007669"/>
    <property type="project" value="Ensembl"/>
</dbReference>
<dbReference type="GO" id="GO:0030838">
    <property type="term" value="P:positive regulation of actin filament polymerization"/>
    <property type="evidence" value="ECO:0007669"/>
    <property type="project" value="Ensembl"/>
</dbReference>
<dbReference type="GO" id="GO:0008284">
    <property type="term" value="P:positive regulation of cell population proliferation"/>
    <property type="evidence" value="ECO:0007669"/>
    <property type="project" value="Ensembl"/>
</dbReference>
<dbReference type="GO" id="GO:0043268">
    <property type="term" value="P:positive regulation of potassium ion transport"/>
    <property type="evidence" value="ECO:0007669"/>
    <property type="project" value="Ensembl"/>
</dbReference>
<dbReference type="GO" id="GO:1903078">
    <property type="term" value="P:positive regulation of protein localization to plasma membrane"/>
    <property type="evidence" value="ECO:0007669"/>
    <property type="project" value="Ensembl"/>
</dbReference>
<dbReference type="GO" id="GO:0072659">
    <property type="term" value="P:protein localization to plasma membrane"/>
    <property type="evidence" value="ECO:0007669"/>
    <property type="project" value="Ensembl"/>
</dbReference>
<dbReference type="GO" id="GO:0008360">
    <property type="term" value="P:regulation of cell shape"/>
    <property type="evidence" value="ECO:0007669"/>
    <property type="project" value="Ensembl"/>
</dbReference>
<dbReference type="GO" id="GO:0031641">
    <property type="term" value="P:regulation of myelination"/>
    <property type="evidence" value="ECO:0007669"/>
    <property type="project" value="Ensembl"/>
</dbReference>
<dbReference type="GO" id="GO:1903764">
    <property type="term" value="P:regulation of potassium ion export across plasma membrane"/>
    <property type="evidence" value="ECO:0007669"/>
    <property type="project" value="Ensembl"/>
</dbReference>
<dbReference type="GO" id="GO:1903286">
    <property type="term" value="P:regulation of potassium ion import"/>
    <property type="evidence" value="ECO:0007669"/>
    <property type="project" value="Ensembl"/>
</dbReference>
<dbReference type="GO" id="GO:1902473">
    <property type="term" value="P:regulation of protein localization to synapse"/>
    <property type="evidence" value="ECO:0007669"/>
    <property type="project" value="Ensembl"/>
</dbReference>
<dbReference type="GO" id="GO:0098911">
    <property type="term" value="P:regulation of ventricular cardiac muscle cell action potential"/>
    <property type="evidence" value="ECO:0007669"/>
    <property type="project" value="Ensembl"/>
</dbReference>
<dbReference type="GO" id="GO:0048608">
    <property type="term" value="P:reproductive structure development"/>
    <property type="evidence" value="ECO:0007669"/>
    <property type="project" value="Ensembl"/>
</dbReference>
<dbReference type="GO" id="GO:0048745">
    <property type="term" value="P:smooth muscle tissue development"/>
    <property type="evidence" value="ECO:0007669"/>
    <property type="project" value="Ensembl"/>
</dbReference>
<dbReference type="GO" id="GO:0042098">
    <property type="term" value="P:T cell proliferation"/>
    <property type="evidence" value="ECO:0007669"/>
    <property type="project" value="Ensembl"/>
</dbReference>
<dbReference type="CDD" id="cd00071">
    <property type="entry name" value="GMPK"/>
    <property type="match status" value="1"/>
</dbReference>
<dbReference type="CDD" id="cd06723">
    <property type="entry name" value="PDZ1_Dlg1-2-4-like"/>
    <property type="match status" value="1"/>
</dbReference>
<dbReference type="CDD" id="cd06724">
    <property type="entry name" value="PDZ2_Dlg1-2-4-like"/>
    <property type="match status" value="1"/>
</dbReference>
<dbReference type="CDD" id="cd06795">
    <property type="entry name" value="PDZ3_Dlg1-2-4-like"/>
    <property type="match status" value="1"/>
</dbReference>
<dbReference type="CDD" id="cd12031">
    <property type="entry name" value="SH3_DLG1"/>
    <property type="match status" value="1"/>
</dbReference>
<dbReference type="FunFam" id="3.40.50.300:FF:001402">
    <property type="entry name" value="Discs, large homolog 3 (Drosophila)"/>
    <property type="match status" value="1"/>
</dbReference>
<dbReference type="FunFam" id="1.10.287.470:FF:000001">
    <property type="entry name" value="Disks large 1 isoform X3"/>
    <property type="match status" value="1"/>
</dbReference>
<dbReference type="FunFam" id="2.30.30.40:FF:000008">
    <property type="entry name" value="Disks large homolog 1 isoform 2"/>
    <property type="match status" value="1"/>
</dbReference>
<dbReference type="FunFam" id="2.30.42.10:FF:000001">
    <property type="entry name" value="Disks large homolog 1 isoform 2"/>
    <property type="match status" value="1"/>
</dbReference>
<dbReference type="FunFam" id="3.30.63.10:FF:000001">
    <property type="entry name" value="Disks large homolog 1 isoform 2"/>
    <property type="match status" value="1"/>
</dbReference>
<dbReference type="FunFam" id="2.30.30.40:FF:000058">
    <property type="entry name" value="Disks large homolog 1 isoform X1"/>
    <property type="match status" value="1"/>
</dbReference>
<dbReference type="FunFam" id="2.30.42.10:FF:000049">
    <property type="entry name" value="disks large homolog 1 isoform X1"/>
    <property type="match status" value="1"/>
</dbReference>
<dbReference type="FunFam" id="2.30.42.10:FF:000002">
    <property type="entry name" value="Disks large homolog 4 isoform 2"/>
    <property type="match status" value="1"/>
</dbReference>
<dbReference type="Gene3D" id="2.30.42.10">
    <property type="match status" value="3"/>
</dbReference>
<dbReference type="Gene3D" id="3.30.63.10">
    <property type="entry name" value="Guanylate Kinase phosphate binding domain"/>
    <property type="match status" value="1"/>
</dbReference>
<dbReference type="Gene3D" id="1.10.287.470">
    <property type="entry name" value="Helix hairpin bin"/>
    <property type="match status" value="1"/>
</dbReference>
<dbReference type="Gene3D" id="3.40.50.300">
    <property type="entry name" value="P-loop containing nucleotide triphosphate hydrolases"/>
    <property type="match status" value="1"/>
</dbReference>
<dbReference type="Gene3D" id="2.30.30.40">
    <property type="entry name" value="SH3 Domains"/>
    <property type="match status" value="2"/>
</dbReference>
<dbReference type="InterPro" id="IPR019583">
    <property type="entry name" value="DLG1-4_PDZ_assoc"/>
</dbReference>
<dbReference type="InterPro" id="IPR016313">
    <property type="entry name" value="DLG1-like"/>
</dbReference>
<dbReference type="InterPro" id="IPR019590">
    <property type="entry name" value="DLG1_PEST_dom"/>
</dbReference>
<dbReference type="InterPro" id="IPR008145">
    <property type="entry name" value="GK/Ca_channel_bsu"/>
</dbReference>
<dbReference type="InterPro" id="IPR008144">
    <property type="entry name" value="Guanylate_kin-like_dom"/>
</dbReference>
<dbReference type="InterPro" id="IPR020590">
    <property type="entry name" value="Guanylate_kinase_CS"/>
</dbReference>
<dbReference type="InterPro" id="IPR015143">
    <property type="entry name" value="L27_1"/>
</dbReference>
<dbReference type="InterPro" id="IPR004172">
    <property type="entry name" value="L27_dom"/>
</dbReference>
<dbReference type="InterPro" id="IPR036892">
    <property type="entry name" value="L27_dom_sf"/>
</dbReference>
<dbReference type="InterPro" id="IPR027417">
    <property type="entry name" value="P-loop_NTPase"/>
</dbReference>
<dbReference type="InterPro" id="IPR001478">
    <property type="entry name" value="PDZ"/>
</dbReference>
<dbReference type="InterPro" id="IPR036034">
    <property type="entry name" value="PDZ_sf"/>
</dbReference>
<dbReference type="InterPro" id="IPR036028">
    <property type="entry name" value="SH3-like_dom_sf"/>
</dbReference>
<dbReference type="InterPro" id="IPR001452">
    <property type="entry name" value="SH3_domain"/>
</dbReference>
<dbReference type="InterPro" id="IPR050614">
    <property type="entry name" value="Synaptic_Scaffolding_LAP-MAGUK"/>
</dbReference>
<dbReference type="PANTHER" id="PTHR23119">
    <property type="entry name" value="DISCS LARGE"/>
    <property type="match status" value="1"/>
</dbReference>
<dbReference type="PANTHER" id="PTHR23119:SF5">
    <property type="entry name" value="DISKS LARGE HOMOLOG 1"/>
    <property type="match status" value="1"/>
</dbReference>
<dbReference type="Pfam" id="PF00625">
    <property type="entry name" value="Guanylate_kin"/>
    <property type="match status" value="1"/>
</dbReference>
<dbReference type="Pfam" id="PF09058">
    <property type="entry name" value="L27_1"/>
    <property type="match status" value="1"/>
</dbReference>
<dbReference type="Pfam" id="PF10608">
    <property type="entry name" value="MAGUK_N_PEST"/>
    <property type="match status" value="1"/>
</dbReference>
<dbReference type="Pfam" id="PF00595">
    <property type="entry name" value="PDZ"/>
    <property type="match status" value="3"/>
</dbReference>
<dbReference type="Pfam" id="PF10600">
    <property type="entry name" value="PDZ_assoc"/>
    <property type="match status" value="1"/>
</dbReference>
<dbReference type="Pfam" id="PF00018">
    <property type="entry name" value="SH3_1"/>
    <property type="match status" value="1"/>
</dbReference>
<dbReference type="PIRSF" id="PIRSF001741">
    <property type="entry name" value="MAGUK_DLGH"/>
    <property type="match status" value="1"/>
</dbReference>
<dbReference type="SMART" id="SM00072">
    <property type="entry name" value="GuKc"/>
    <property type="match status" value="1"/>
</dbReference>
<dbReference type="SMART" id="SM00569">
    <property type="entry name" value="L27"/>
    <property type="match status" value="1"/>
</dbReference>
<dbReference type="SMART" id="SM01277">
    <property type="entry name" value="MAGUK_N_PEST"/>
    <property type="match status" value="1"/>
</dbReference>
<dbReference type="SMART" id="SM00228">
    <property type="entry name" value="PDZ"/>
    <property type="match status" value="3"/>
</dbReference>
<dbReference type="SMART" id="SM00326">
    <property type="entry name" value="SH3"/>
    <property type="match status" value="1"/>
</dbReference>
<dbReference type="SUPFAM" id="SSF101288">
    <property type="entry name" value="L27 domain"/>
    <property type="match status" value="1"/>
</dbReference>
<dbReference type="SUPFAM" id="SSF52540">
    <property type="entry name" value="P-loop containing nucleoside triphosphate hydrolases"/>
    <property type="match status" value="1"/>
</dbReference>
<dbReference type="SUPFAM" id="SSF50156">
    <property type="entry name" value="PDZ domain-like"/>
    <property type="match status" value="3"/>
</dbReference>
<dbReference type="SUPFAM" id="SSF50044">
    <property type="entry name" value="SH3-domain"/>
    <property type="match status" value="1"/>
</dbReference>
<dbReference type="PROSITE" id="PS00856">
    <property type="entry name" value="GUANYLATE_KINASE_1"/>
    <property type="match status" value="1"/>
</dbReference>
<dbReference type="PROSITE" id="PS50052">
    <property type="entry name" value="GUANYLATE_KINASE_2"/>
    <property type="match status" value="1"/>
</dbReference>
<dbReference type="PROSITE" id="PS51022">
    <property type="entry name" value="L27"/>
    <property type="match status" value="1"/>
</dbReference>
<dbReference type="PROSITE" id="PS50106">
    <property type="entry name" value="PDZ"/>
    <property type="match status" value="3"/>
</dbReference>
<dbReference type="PROSITE" id="PS50002">
    <property type="entry name" value="SH3"/>
    <property type="match status" value="1"/>
</dbReference>
<organism evidence="13">
    <name type="scientific">Canis lupus familiaris</name>
    <name type="common">Dog</name>
    <name type="synonym">Canis familiaris</name>
    <dbReference type="NCBI Taxonomy" id="9615"/>
    <lineage>
        <taxon>Eukaryota</taxon>
        <taxon>Metazoa</taxon>
        <taxon>Chordata</taxon>
        <taxon>Craniata</taxon>
        <taxon>Vertebrata</taxon>
        <taxon>Euteleostomi</taxon>
        <taxon>Mammalia</taxon>
        <taxon>Eutheria</taxon>
        <taxon>Laurasiatheria</taxon>
        <taxon>Carnivora</taxon>
        <taxon>Caniformia</taxon>
        <taxon>Canidae</taxon>
        <taxon>Canis</taxon>
    </lineage>
</organism>
<proteinExistence type="inferred from homology"/>
<reference evidence="12" key="1">
    <citation type="journal article" date="2005" name="Nature">
        <title>Genome sequence, comparative analysis and haplotype structure of the domestic dog.</title>
        <authorList>
            <person name="Lindblad-Toh K."/>
            <person name="Wade C.M."/>
            <person name="Mikkelsen T.S."/>
            <person name="Karlsson E.K."/>
            <person name="Jaffe D.B."/>
            <person name="Kamal M."/>
            <person name="Clamp M."/>
            <person name="Chang J.L."/>
            <person name="Kulbokas E.J. III"/>
            <person name="Zody M.C."/>
            <person name="Mauceli E."/>
            <person name="Xie X."/>
            <person name="Breen M."/>
            <person name="Wayne R.K."/>
            <person name="Ostrander E.A."/>
            <person name="Ponting C.P."/>
            <person name="Galibert F."/>
            <person name="Smith D.R."/>
            <person name="deJong P.J."/>
            <person name="Kirkness E.F."/>
            <person name="Alvarez P."/>
            <person name="Biagi T."/>
            <person name="Brockman W."/>
            <person name="Butler J."/>
            <person name="Chin C.-W."/>
            <person name="Cook A."/>
            <person name="Cuff J."/>
            <person name="Daly M.J."/>
            <person name="DeCaprio D."/>
            <person name="Gnerre S."/>
            <person name="Grabherr M."/>
            <person name="Kellis M."/>
            <person name="Kleber M."/>
            <person name="Bardeleben C."/>
            <person name="Goodstadt L."/>
            <person name="Heger A."/>
            <person name="Hitte C."/>
            <person name="Kim L."/>
            <person name="Koepfli K.-P."/>
            <person name="Parker H.G."/>
            <person name="Pollinger J.P."/>
            <person name="Searle S.M.J."/>
            <person name="Sutter N.B."/>
            <person name="Thomas R."/>
            <person name="Webber C."/>
            <person name="Baldwin J."/>
            <person name="Abebe A."/>
            <person name="Abouelleil A."/>
            <person name="Aftuck L."/>
            <person name="Ait-Zahra M."/>
            <person name="Aldredge T."/>
            <person name="Allen N."/>
            <person name="An P."/>
            <person name="Anderson S."/>
            <person name="Antoine C."/>
            <person name="Arachchi H."/>
            <person name="Aslam A."/>
            <person name="Ayotte L."/>
            <person name="Bachantsang P."/>
            <person name="Barry A."/>
            <person name="Bayul T."/>
            <person name="Benamara M."/>
            <person name="Berlin A."/>
            <person name="Bessette D."/>
            <person name="Blitshteyn B."/>
            <person name="Bloom T."/>
            <person name="Blye J."/>
            <person name="Boguslavskiy L."/>
            <person name="Bonnet C."/>
            <person name="Boukhgalter B."/>
            <person name="Brown A."/>
            <person name="Cahill P."/>
            <person name="Calixte N."/>
            <person name="Camarata J."/>
            <person name="Cheshatsang Y."/>
            <person name="Chu J."/>
            <person name="Citroen M."/>
            <person name="Collymore A."/>
            <person name="Cooke P."/>
            <person name="Dawoe T."/>
            <person name="Daza R."/>
            <person name="Decktor K."/>
            <person name="DeGray S."/>
            <person name="Dhargay N."/>
            <person name="Dooley K."/>
            <person name="Dooley K."/>
            <person name="Dorje P."/>
            <person name="Dorjee K."/>
            <person name="Dorris L."/>
            <person name="Duffey N."/>
            <person name="Dupes A."/>
            <person name="Egbiremolen O."/>
            <person name="Elong R."/>
            <person name="Falk J."/>
            <person name="Farina A."/>
            <person name="Faro S."/>
            <person name="Ferguson D."/>
            <person name="Ferreira P."/>
            <person name="Fisher S."/>
            <person name="FitzGerald M."/>
            <person name="Foley K."/>
            <person name="Foley C."/>
            <person name="Franke A."/>
            <person name="Friedrich D."/>
            <person name="Gage D."/>
            <person name="Garber M."/>
            <person name="Gearin G."/>
            <person name="Giannoukos G."/>
            <person name="Goode T."/>
            <person name="Goyette A."/>
            <person name="Graham J."/>
            <person name="Grandbois E."/>
            <person name="Gyaltsen K."/>
            <person name="Hafez N."/>
            <person name="Hagopian D."/>
            <person name="Hagos B."/>
            <person name="Hall J."/>
            <person name="Healy C."/>
            <person name="Hegarty R."/>
            <person name="Honan T."/>
            <person name="Horn A."/>
            <person name="Houde N."/>
            <person name="Hughes L."/>
            <person name="Hunnicutt L."/>
            <person name="Husby M."/>
            <person name="Jester B."/>
            <person name="Jones C."/>
            <person name="Kamat A."/>
            <person name="Kanga B."/>
            <person name="Kells C."/>
            <person name="Khazanovich D."/>
            <person name="Kieu A.C."/>
            <person name="Kisner P."/>
            <person name="Kumar M."/>
            <person name="Lance K."/>
            <person name="Landers T."/>
            <person name="Lara M."/>
            <person name="Lee W."/>
            <person name="Leger J.-P."/>
            <person name="Lennon N."/>
            <person name="Leuper L."/>
            <person name="LeVine S."/>
            <person name="Liu J."/>
            <person name="Liu X."/>
            <person name="Lokyitsang Y."/>
            <person name="Lokyitsang T."/>
            <person name="Lui A."/>
            <person name="Macdonald J."/>
            <person name="Major J."/>
            <person name="Marabella R."/>
            <person name="Maru K."/>
            <person name="Matthews C."/>
            <person name="McDonough S."/>
            <person name="Mehta T."/>
            <person name="Meldrim J."/>
            <person name="Melnikov A."/>
            <person name="Meneus L."/>
            <person name="Mihalev A."/>
            <person name="Mihova T."/>
            <person name="Miller K."/>
            <person name="Mittelman R."/>
            <person name="Mlenga V."/>
            <person name="Mulrain L."/>
            <person name="Munson G."/>
            <person name="Navidi A."/>
            <person name="Naylor J."/>
            <person name="Nguyen T."/>
            <person name="Nguyen N."/>
            <person name="Nguyen C."/>
            <person name="Nguyen T."/>
            <person name="Nicol R."/>
            <person name="Norbu N."/>
            <person name="Norbu C."/>
            <person name="Novod N."/>
            <person name="Nyima T."/>
            <person name="Olandt P."/>
            <person name="O'Neill B."/>
            <person name="O'Neill K."/>
            <person name="Osman S."/>
            <person name="Oyono L."/>
            <person name="Patti C."/>
            <person name="Perrin D."/>
            <person name="Phunkhang P."/>
            <person name="Pierre F."/>
            <person name="Priest M."/>
            <person name="Rachupka A."/>
            <person name="Raghuraman S."/>
            <person name="Rameau R."/>
            <person name="Ray V."/>
            <person name="Raymond C."/>
            <person name="Rege F."/>
            <person name="Rise C."/>
            <person name="Rogers J."/>
            <person name="Rogov P."/>
            <person name="Sahalie J."/>
            <person name="Settipalli S."/>
            <person name="Sharpe T."/>
            <person name="Shea T."/>
            <person name="Sheehan M."/>
            <person name="Sherpa N."/>
            <person name="Shi J."/>
            <person name="Shih D."/>
            <person name="Sloan J."/>
            <person name="Smith C."/>
            <person name="Sparrow T."/>
            <person name="Stalker J."/>
            <person name="Stange-Thomann N."/>
            <person name="Stavropoulos S."/>
            <person name="Stone C."/>
            <person name="Stone S."/>
            <person name="Sykes S."/>
            <person name="Tchuinga P."/>
            <person name="Tenzing P."/>
            <person name="Tesfaye S."/>
            <person name="Thoulutsang D."/>
            <person name="Thoulutsang Y."/>
            <person name="Topham K."/>
            <person name="Topping I."/>
            <person name="Tsamla T."/>
            <person name="Vassiliev H."/>
            <person name="Venkataraman V."/>
            <person name="Vo A."/>
            <person name="Wangchuk T."/>
            <person name="Wangdi T."/>
            <person name="Weiand M."/>
            <person name="Wilkinson J."/>
            <person name="Wilson A."/>
            <person name="Yadav S."/>
            <person name="Yang S."/>
            <person name="Yang X."/>
            <person name="Young G."/>
            <person name="Yu Q."/>
            <person name="Zainoun J."/>
            <person name="Zembek L."/>
            <person name="Zimmer A."/>
            <person name="Lander E.S."/>
        </authorList>
    </citation>
    <scope>NUCLEOTIDE SEQUENCE [LARGE SCALE GENOMIC DNA]</scope>
    <source>
        <strain evidence="12">Boxer</strain>
    </source>
</reference>
<reference evidence="11" key="2">
    <citation type="journal article" date="2011" name="J. Virol.">
        <title>The avian influenza virus NS1 ESEV PDZ binding motif associates with Dlg1 and Scribble to disrupt cellular tight junctions.</title>
        <authorList>
            <person name="Golebiewski L."/>
            <person name="Liu H."/>
            <person name="Javier R.T."/>
            <person name="Rice A.P."/>
        </authorList>
    </citation>
    <scope>FUNCTION</scope>
    <scope>SUBCELLULAR LOCATION</scope>
</reference>
<comment type="function">
    <text evidence="2 4 10">Essential multidomain scaffolding protein required for normal development (By similarity). Recruits channels, receptors and signaling molecules to discrete plasma membrane domains in polarized cells (By similarity). Promotes epithelial cell layer barrier function via maintaining cell-cell adhesion (PubMed:21849460). May also play a role in adherens junction assembly, signal transduction, cell proliferation, synaptogenesis and lymphocyte activation. Regulates the excitability of cardiac myocytes by modulating the functional expression of Kv4 channels. Functional regulator of Kv1.5 channel. During long-term depression in hippocampal neurons, it recruits ADAM10 to the plasma membrane (By similarity).</text>
</comment>
<comment type="subunit">
    <text evidence="2 3 4 11">Homotetramer (By similarity). Interacts (via guanylate kinase-like domain) with DLGAP1, DLGAP2, DLGAP3, DLGAP4 and MAP1A (By similarity). Interacts (via guanylate kinase-like domain) with KIF13B (By similarity). May interact with HTR2A (By similarity). Interacts (via PDZ domains) with GRIA1 (By similarity). Interacts (via PDZ domains) with GRIN2A (By similarity). Interacts (via PDZ domains) with KCND2 and KCND3 (By similarity). Interacts (via PDZ domains) with KCNA1, KCNA2, KCNA3 and KCNA4 (By similarity). Interacts (via PDZ domains) with ADGRA3 (By similarity). Interacts with KCNF1 (By similarity). Interacts with CAMK2 (By similarity). Interacts with cytoskeleton-associated protein EPB41 (By similarity). Interacts with cytoskeleton-associated protein EZR (By similarity). Found in a complex with KCNA5 and CAV3 (By similarity). Found in a complex with APC and CTNNB1 (By similarity). Interacts (via PDZ domains) with APC (By similarity). Interacts with CDH1 through binding to PIK3R1 (By similarity). Forms multiprotein complexes with CASK, LIN7A, LIN7B, LIN7C, APBA1, and KCNJ12 (By similarity). Interacts with TOPK (By similarity). Forms a tripartite complex composed of DLG1, MPP7 and LIN7 (LIN7A or LIN7C) (By similarity). May interact with TJAP1 (By similarity). Interacts with PTEN (By similarity). Interacts with FRMPD4 (via C-terminus) (By similarity). Interacts with LRFN1, LRFN2 and LRFN4 (By similarity). Interacts with SFPQ (By similarity). Interacts (via PDZ domains) with ADGRA2 (via PDZ-binding motif) (By similarity). Interacts with ADAM10; this interaction recruits ADAM10 to the cell membrane during long-term depression in hippocampal neurons (By similarity). Interacts with DGKI (via PDZ-binding motif) (By similarity). Interacts (via PDZ domains) with MARCHF2 (via PDZ domain); the interaction leads to DLG1 ubiqtuitination and degradation (By similarity). Interacts (via N-terminus) with MPP3; this interaction connects CADM1 with DLG1 and links CADM1 with the regulatory subunit of phosphoinositide-3-kinase (PI3K) by forming a multiprotein complex and participates in cell spreading (By similarity).</text>
</comment>
<comment type="subcellular location">
    <subcellularLocation>
        <location evidence="10">Cell membrane</location>
        <topology evidence="2">Peripheral membrane protein</topology>
    </subcellularLocation>
    <subcellularLocation>
        <location evidence="2">Basolateral cell membrane</location>
    </subcellularLocation>
    <subcellularLocation>
        <location evidence="3">Endoplasmic reticulum membrane</location>
    </subcellularLocation>
    <subcellularLocation>
        <location evidence="3">Postsynaptic density</location>
    </subcellularLocation>
    <subcellularLocation>
        <location evidence="3">Synapse</location>
    </subcellularLocation>
    <subcellularLocation>
        <location evidence="2">Cell membrane</location>
        <location evidence="2">Sarcolemma</location>
    </subcellularLocation>
    <subcellularLocation>
        <location evidence="2">Apical cell membrane</location>
    </subcellularLocation>
    <subcellularLocation>
        <location evidence="2">Cell junction</location>
    </subcellularLocation>
    <subcellularLocation>
        <location evidence="2">Cytoplasm</location>
    </subcellularLocation>
    <text evidence="2 3">Colocalizes with EPB41 at regions of intercellular contacts. Basolateral in epithelial cells (By similarity). May also associate with endoplasmic reticulum membranes. Mainly found in neurons soma, moderately found at postsynaptic densities (By similarity).</text>
</comment>
<comment type="domain">
    <text evidence="2">The PDZ domains may also mediate association to membranes by binding to EPB41 and ADGRA2 together with the L27 domain that binds CASK and DLG2.</text>
</comment>
<comment type="domain">
    <text evidence="2">The L27 domain may regulate DLG1 self-association. The N-terminal alternatively spliced region is capable of binding several SH3 domains and also moderates the level of protein oligomerization.</text>
</comment>
<comment type="PTM">
    <text evidence="2 3">Phosphorylated by MAPK12 (By similarity). Phosphorylation of Ser-232 regulates association with GRIN2A (By similarity).</text>
</comment>
<comment type="PTM">
    <text evidence="2">Ubiquitinated; by MARCHF2 which results in its degradation.</text>
</comment>
<comment type="similarity">
    <text evidence="11">Belongs to the MAGUK family.</text>
</comment>
<evidence type="ECO:0000250" key="1">
    <source>
        <dbReference type="UniProtKB" id="Q12958"/>
    </source>
</evidence>
<evidence type="ECO:0000250" key="2">
    <source>
        <dbReference type="UniProtKB" id="Q12959"/>
    </source>
</evidence>
<evidence type="ECO:0000250" key="3">
    <source>
        <dbReference type="UniProtKB" id="Q62696"/>
    </source>
</evidence>
<evidence type="ECO:0000250" key="4">
    <source>
        <dbReference type="UniProtKB" id="Q811D0"/>
    </source>
</evidence>
<evidence type="ECO:0000255" key="5">
    <source>
        <dbReference type="PROSITE-ProRule" id="PRU00100"/>
    </source>
</evidence>
<evidence type="ECO:0000255" key="6">
    <source>
        <dbReference type="PROSITE-ProRule" id="PRU00143"/>
    </source>
</evidence>
<evidence type="ECO:0000255" key="7">
    <source>
        <dbReference type="PROSITE-ProRule" id="PRU00192"/>
    </source>
</evidence>
<evidence type="ECO:0000255" key="8">
    <source>
        <dbReference type="PROSITE-ProRule" id="PRU00365"/>
    </source>
</evidence>
<evidence type="ECO:0000256" key="9">
    <source>
        <dbReference type="SAM" id="MobiDB-lite"/>
    </source>
</evidence>
<evidence type="ECO:0000269" key="10">
    <source>
    </source>
</evidence>
<evidence type="ECO:0000305" key="11"/>
<evidence type="ECO:0000312" key="12">
    <source>
        <dbReference type="Proteomes" id="UP000002254"/>
    </source>
</evidence>
<evidence type="ECO:0000312" key="13">
    <source>
        <dbReference type="Proteomes" id="UP000694542"/>
    </source>
</evidence>